<protein>
    <recommendedName>
        <fullName evidence="1">tRNA-modifying protein YgfZ</fullName>
    </recommendedName>
</protein>
<accession>B1LD99</accession>
<feature type="chain" id="PRO_1000138076" description="tRNA-modifying protein YgfZ">
    <location>
        <begin position="1"/>
        <end position="326"/>
    </location>
</feature>
<feature type="binding site" evidence="1">
    <location>
        <position position="27"/>
    </location>
    <ligand>
        <name>folate</name>
        <dbReference type="ChEBI" id="CHEBI:62501"/>
    </ligand>
</feature>
<feature type="binding site" evidence="1">
    <location>
        <position position="189"/>
    </location>
    <ligand>
        <name>folate</name>
        <dbReference type="ChEBI" id="CHEBI:62501"/>
    </ligand>
</feature>
<proteinExistence type="inferred from homology"/>
<organism>
    <name type="scientific">Escherichia coli (strain SMS-3-5 / SECEC)</name>
    <dbReference type="NCBI Taxonomy" id="439855"/>
    <lineage>
        <taxon>Bacteria</taxon>
        <taxon>Pseudomonadati</taxon>
        <taxon>Pseudomonadota</taxon>
        <taxon>Gammaproteobacteria</taxon>
        <taxon>Enterobacterales</taxon>
        <taxon>Enterobacteriaceae</taxon>
        <taxon>Escherichia</taxon>
    </lineage>
</organism>
<sequence>MAFTPFPPRQPTASARLPLTLMTLDDWALATITGADSEKYMQGQVTADVSQMTEDQHLLAAHCDAKGKMWSNLRLFRDGDGFAWIERRSVREPQLTELKKYAVFSKVTIAPDDERVLLGVAGFQARAALANLFSELPSKEKQVVKEGATTLLWFEHPAERFLIVTDEATANMLTDKLRGEAELNNSQQWLALNIEAGFPVIDAANSGQFIPQATNLQALGGISFKKGCYTGQEMVARAKFRGANKRALWLLTGSASRLPEAGEDLELKMGENWRRTGTVLAAVKLEDGQVVVQVVMNNDMEPDSIFRVRDDANTLRIEPLPYSLEE</sequence>
<dbReference type="EMBL" id="CP000970">
    <property type="protein sequence ID" value="ACB19826.1"/>
    <property type="molecule type" value="Genomic_DNA"/>
</dbReference>
<dbReference type="RefSeq" id="WP_000886075.1">
    <property type="nucleotide sequence ID" value="NC_010498.1"/>
</dbReference>
<dbReference type="SMR" id="B1LD99"/>
<dbReference type="KEGG" id="ecm:EcSMS35_3031"/>
<dbReference type="HOGENOM" id="CLU_007884_6_1_6"/>
<dbReference type="Proteomes" id="UP000007011">
    <property type="component" value="Chromosome"/>
</dbReference>
<dbReference type="GO" id="GO:0005737">
    <property type="term" value="C:cytoplasm"/>
    <property type="evidence" value="ECO:0007669"/>
    <property type="project" value="UniProtKB-SubCell"/>
</dbReference>
<dbReference type="GO" id="GO:0005542">
    <property type="term" value="F:folic acid binding"/>
    <property type="evidence" value="ECO:0007669"/>
    <property type="project" value="UniProtKB-UniRule"/>
</dbReference>
<dbReference type="GO" id="GO:0016226">
    <property type="term" value="P:iron-sulfur cluster assembly"/>
    <property type="evidence" value="ECO:0007669"/>
    <property type="project" value="TreeGrafter"/>
</dbReference>
<dbReference type="GO" id="GO:0009451">
    <property type="term" value="P:RNA modification"/>
    <property type="evidence" value="ECO:0007669"/>
    <property type="project" value="InterPro"/>
</dbReference>
<dbReference type="GO" id="GO:0008033">
    <property type="term" value="P:tRNA processing"/>
    <property type="evidence" value="ECO:0007669"/>
    <property type="project" value="UniProtKB-UniRule"/>
</dbReference>
<dbReference type="FunFam" id="2.40.30.160:FF:000001">
    <property type="entry name" value="tRNA-modifying protein YgfZ"/>
    <property type="match status" value="1"/>
</dbReference>
<dbReference type="FunFam" id="3.30.70.1400:FF:000002">
    <property type="entry name" value="tRNA-modifying protein YgfZ"/>
    <property type="match status" value="1"/>
</dbReference>
<dbReference type="FunFam" id="3.30.70.1630:FF:000001">
    <property type="entry name" value="tRNA-modifying protein YgfZ"/>
    <property type="match status" value="1"/>
</dbReference>
<dbReference type="Gene3D" id="2.40.30.160">
    <property type="match status" value="1"/>
</dbReference>
<dbReference type="Gene3D" id="3.30.70.1630">
    <property type="match status" value="1"/>
</dbReference>
<dbReference type="Gene3D" id="3.30.70.1400">
    <property type="entry name" value="Aminomethyltransferase beta-barrel domains"/>
    <property type="match status" value="1"/>
</dbReference>
<dbReference type="HAMAP" id="MF_01175">
    <property type="entry name" value="tRNA_modifying_YgfZ"/>
    <property type="match status" value="1"/>
</dbReference>
<dbReference type="InterPro" id="IPR006222">
    <property type="entry name" value="GCV_T_N"/>
</dbReference>
<dbReference type="InterPro" id="IPR029043">
    <property type="entry name" value="GcvT/YgfZ_C"/>
</dbReference>
<dbReference type="InterPro" id="IPR023758">
    <property type="entry name" value="tRNA-modifying_YgfZ"/>
</dbReference>
<dbReference type="InterPro" id="IPR045179">
    <property type="entry name" value="YgfZ/GcvT"/>
</dbReference>
<dbReference type="InterPro" id="IPR017703">
    <property type="entry name" value="YgfZ/GcvT_CS"/>
</dbReference>
<dbReference type="InterPro" id="IPR048451">
    <property type="entry name" value="YgfZ_barrel"/>
</dbReference>
<dbReference type="NCBIfam" id="NF007110">
    <property type="entry name" value="PRK09559.1"/>
    <property type="match status" value="1"/>
</dbReference>
<dbReference type="NCBIfam" id="TIGR03317">
    <property type="entry name" value="ygfZ_signature"/>
    <property type="match status" value="1"/>
</dbReference>
<dbReference type="PANTHER" id="PTHR22602">
    <property type="entry name" value="TRANSFERASE CAF17, MITOCHONDRIAL-RELATED"/>
    <property type="match status" value="1"/>
</dbReference>
<dbReference type="PANTHER" id="PTHR22602:SF0">
    <property type="entry name" value="TRANSFERASE CAF17, MITOCHONDRIAL-RELATED"/>
    <property type="match status" value="1"/>
</dbReference>
<dbReference type="Pfam" id="PF01571">
    <property type="entry name" value="GCV_T"/>
    <property type="match status" value="1"/>
</dbReference>
<dbReference type="Pfam" id="PF21130">
    <property type="entry name" value="YgfZ_barrel"/>
    <property type="match status" value="1"/>
</dbReference>
<dbReference type="SUPFAM" id="SSF101790">
    <property type="entry name" value="Aminomethyltransferase beta-barrel domain"/>
    <property type="match status" value="1"/>
</dbReference>
<dbReference type="SUPFAM" id="SSF103025">
    <property type="entry name" value="Folate-binding domain"/>
    <property type="match status" value="1"/>
</dbReference>
<reference key="1">
    <citation type="journal article" date="2008" name="J. Bacteriol.">
        <title>Insights into the environmental resistance gene pool from the genome sequence of the multidrug-resistant environmental isolate Escherichia coli SMS-3-5.</title>
        <authorList>
            <person name="Fricke W.F."/>
            <person name="Wright M.S."/>
            <person name="Lindell A.H."/>
            <person name="Harkins D.M."/>
            <person name="Baker-Austin C."/>
            <person name="Ravel J."/>
            <person name="Stepanauskas R."/>
        </authorList>
    </citation>
    <scope>NUCLEOTIDE SEQUENCE [LARGE SCALE GENOMIC DNA]</scope>
    <source>
        <strain>SMS-3-5 / SECEC</strain>
    </source>
</reference>
<comment type="function">
    <text evidence="1">Folate-binding protein involved in regulating the level of ATP-DnaA and in the modification of some tRNAs. It is probably a key factor in regulatory networks that act via tRNA modification, such as initiation of chromosomal replication.</text>
</comment>
<comment type="subcellular location">
    <subcellularLocation>
        <location evidence="1">Cytoplasm</location>
    </subcellularLocation>
</comment>
<comment type="similarity">
    <text evidence="1">Belongs to the tRNA-modifying YgfZ family.</text>
</comment>
<keyword id="KW-0963">Cytoplasm</keyword>
<keyword id="KW-0290">Folate-binding</keyword>
<keyword id="KW-0819">tRNA processing</keyword>
<name>YGFZ_ECOSM</name>
<gene>
    <name evidence="1" type="primary">ygfZ</name>
    <name type="ordered locus">EcSMS35_3031</name>
</gene>
<evidence type="ECO:0000255" key="1">
    <source>
        <dbReference type="HAMAP-Rule" id="MF_01175"/>
    </source>
</evidence>